<organism>
    <name type="scientific">Mycobacterium leprae (strain TN)</name>
    <dbReference type="NCBI Taxonomy" id="272631"/>
    <lineage>
        <taxon>Bacteria</taxon>
        <taxon>Bacillati</taxon>
        <taxon>Actinomycetota</taxon>
        <taxon>Actinomycetes</taxon>
        <taxon>Mycobacteriales</taxon>
        <taxon>Mycobacteriaceae</taxon>
        <taxon>Mycobacterium</taxon>
    </lineage>
</organism>
<name>MRAZ_MYCLE</name>
<reference key="1">
    <citation type="journal article" date="2001" name="Nature">
        <title>Massive gene decay in the leprosy bacillus.</title>
        <authorList>
            <person name="Cole S.T."/>
            <person name="Eiglmeier K."/>
            <person name="Parkhill J."/>
            <person name="James K.D."/>
            <person name="Thomson N.R."/>
            <person name="Wheeler P.R."/>
            <person name="Honore N."/>
            <person name="Garnier T."/>
            <person name="Churcher C.M."/>
            <person name="Harris D.E."/>
            <person name="Mungall K.L."/>
            <person name="Basham D."/>
            <person name="Brown D."/>
            <person name="Chillingworth T."/>
            <person name="Connor R."/>
            <person name="Davies R.M."/>
            <person name="Devlin K."/>
            <person name="Duthoy S."/>
            <person name="Feltwell T."/>
            <person name="Fraser A."/>
            <person name="Hamlin N."/>
            <person name="Holroyd S."/>
            <person name="Hornsby T."/>
            <person name="Jagels K."/>
            <person name="Lacroix C."/>
            <person name="Maclean J."/>
            <person name="Moule S."/>
            <person name="Murphy L.D."/>
            <person name="Oliver K."/>
            <person name="Quail M.A."/>
            <person name="Rajandream M.A."/>
            <person name="Rutherford K.M."/>
            <person name="Rutter S."/>
            <person name="Seeger K."/>
            <person name="Simon S."/>
            <person name="Simmonds M."/>
            <person name="Skelton J."/>
            <person name="Squares R."/>
            <person name="Squares S."/>
            <person name="Stevens K."/>
            <person name="Taylor K."/>
            <person name="Whitehead S."/>
            <person name="Woodward J.R."/>
            <person name="Barrell B.G."/>
        </authorList>
    </citation>
    <scope>NUCLEOTIDE SEQUENCE [LARGE SCALE GENOMIC DNA]</scope>
    <source>
        <strain>TN</strain>
    </source>
</reference>
<protein>
    <recommendedName>
        <fullName>Transcriptional regulator MraZ</fullName>
    </recommendedName>
</protein>
<comment type="subunit">
    <text evidence="1">Forms oligomers.</text>
</comment>
<comment type="subcellular location">
    <subcellularLocation>
        <location evidence="1">Cytoplasm</location>
        <location evidence="1">Nucleoid</location>
    </subcellularLocation>
</comment>
<comment type="similarity">
    <text evidence="1">Belongs to the MraZ family.</text>
</comment>
<keyword id="KW-0963">Cytoplasm</keyword>
<keyword id="KW-0238">DNA-binding</keyword>
<keyword id="KW-1185">Reference proteome</keyword>
<keyword id="KW-0677">Repeat</keyword>
<keyword id="KW-0804">Transcription</keyword>
<keyword id="KW-0805">Transcription regulation</keyword>
<feature type="chain" id="PRO_0000108504" description="Transcriptional regulator MraZ">
    <location>
        <begin position="1"/>
        <end position="143"/>
    </location>
</feature>
<feature type="domain" description="SpoVT-AbrB 1" evidence="2">
    <location>
        <begin position="5"/>
        <end position="47"/>
    </location>
</feature>
<feature type="domain" description="SpoVT-AbrB 2" evidence="2">
    <location>
        <begin position="76"/>
        <end position="119"/>
    </location>
</feature>
<proteinExistence type="inferred from homology"/>
<dbReference type="EMBL" id="AL022602">
    <property type="protein sequence ID" value="CAA18677.1"/>
    <property type="molecule type" value="Genomic_DNA"/>
</dbReference>
<dbReference type="EMBL" id="AL583920">
    <property type="protein sequence ID" value="CAC31286.1"/>
    <property type="molecule type" value="Genomic_DNA"/>
</dbReference>
<dbReference type="PIR" id="C87022">
    <property type="entry name" value="C87022"/>
</dbReference>
<dbReference type="RefSeq" id="NP_301688.1">
    <property type="nucleotide sequence ID" value="NC_002677.1"/>
</dbReference>
<dbReference type="RefSeq" id="WP_010908012.1">
    <property type="nucleotide sequence ID" value="NC_002677.1"/>
</dbReference>
<dbReference type="SMR" id="O69561"/>
<dbReference type="STRING" id="272631.gene:17574731"/>
<dbReference type="KEGG" id="mle:ML0905"/>
<dbReference type="PATRIC" id="fig|272631.5.peg.1646"/>
<dbReference type="Leproma" id="ML0905"/>
<dbReference type="eggNOG" id="COG2001">
    <property type="taxonomic scope" value="Bacteria"/>
</dbReference>
<dbReference type="HOGENOM" id="CLU_107907_0_5_11"/>
<dbReference type="OrthoDB" id="9807753at2"/>
<dbReference type="Proteomes" id="UP000000806">
    <property type="component" value="Chromosome"/>
</dbReference>
<dbReference type="GO" id="GO:0005737">
    <property type="term" value="C:cytoplasm"/>
    <property type="evidence" value="ECO:0007669"/>
    <property type="project" value="UniProtKB-UniRule"/>
</dbReference>
<dbReference type="GO" id="GO:0009295">
    <property type="term" value="C:nucleoid"/>
    <property type="evidence" value="ECO:0007669"/>
    <property type="project" value="UniProtKB-SubCell"/>
</dbReference>
<dbReference type="GO" id="GO:0003700">
    <property type="term" value="F:DNA-binding transcription factor activity"/>
    <property type="evidence" value="ECO:0007669"/>
    <property type="project" value="UniProtKB-UniRule"/>
</dbReference>
<dbReference type="GO" id="GO:0000976">
    <property type="term" value="F:transcription cis-regulatory region binding"/>
    <property type="evidence" value="ECO:0007669"/>
    <property type="project" value="TreeGrafter"/>
</dbReference>
<dbReference type="GO" id="GO:2000143">
    <property type="term" value="P:negative regulation of DNA-templated transcription initiation"/>
    <property type="evidence" value="ECO:0007669"/>
    <property type="project" value="TreeGrafter"/>
</dbReference>
<dbReference type="CDD" id="cd16321">
    <property type="entry name" value="MraZ_C"/>
    <property type="match status" value="1"/>
</dbReference>
<dbReference type="CDD" id="cd16320">
    <property type="entry name" value="MraZ_N"/>
    <property type="match status" value="1"/>
</dbReference>
<dbReference type="FunFam" id="3.40.1550.20:FF:000004">
    <property type="entry name" value="Transcriptional regulator MraZ"/>
    <property type="match status" value="1"/>
</dbReference>
<dbReference type="Gene3D" id="3.40.1550.20">
    <property type="entry name" value="Transcriptional regulator MraZ domain"/>
    <property type="match status" value="1"/>
</dbReference>
<dbReference type="HAMAP" id="MF_01008">
    <property type="entry name" value="MraZ"/>
    <property type="match status" value="1"/>
</dbReference>
<dbReference type="InterPro" id="IPR003444">
    <property type="entry name" value="MraZ"/>
</dbReference>
<dbReference type="InterPro" id="IPR035644">
    <property type="entry name" value="MraZ_C"/>
</dbReference>
<dbReference type="InterPro" id="IPR020603">
    <property type="entry name" value="MraZ_dom"/>
</dbReference>
<dbReference type="InterPro" id="IPR035642">
    <property type="entry name" value="MraZ_N"/>
</dbReference>
<dbReference type="InterPro" id="IPR038619">
    <property type="entry name" value="MraZ_sf"/>
</dbReference>
<dbReference type="InterPro" id="IPR007159">
    <property type="entry name" value="SpoVT-AbrB_dom"/>
</dbReference>
<dbReference type="InterPro" id="IPR037914">
    <property type="entry name" value="SpoVT-AbrB_sf"/>
</dbReference>
<dbReference type="NCBIfam" id="TIGR00242">
    <property type="entry name" value="division/cell wall cluster transcriptional repressor MraZ"/>
    <property type="match status" value="1"/>
</dbReference>
<dbReference type="PANTHER" id="PTHR34701">
    <property type="entry name" value="TRANSCRIPTIONAL REGULATOR MRAZ"/>
    <property type="match status" value="1"/>
</dbReference>
<dbReference type="PANTHER" id="PTHR34701:SF1">
    <property type="entry name" value="TRANSCRIPTIONAL REGULATOR MRAZ"/>
    <property type="match status" value="1"/>
</dbReference>
<dbReference type="Pfam" id="PF02381">
    <property type="entry name" value="MraZ"/>
    <property type="match status" value="2"/>
</dbReference>
<dbReference type="SUPFAM" id="SSF89447">
    <property type="entry name" value="AbrB/MazE/MraZ-like"/>
    <property type="match status" value="1"/>
</dbReference>
<dbReference type="PROSITE" id="PS51740">
    <property type="entry name" value="SPOVT_ABRB"/>
    <property type="match status" value="2"/>
</dbReference>
<sequence length="143" mass="16057">MFLGTHTPKLDDKGRLTLPAKFRDALVGGLMVTKSQDHSLAVYPRAEFEQLARRASKMSRSNPEARAFLRNLAAGTDEQHPDMQGRITLSADHRRYANLSKDCVVIGAVDYLEIWDAQAWHDYQQTHEENFSAASDEALGDII</sequence>
<evidence type="ECO:0000255" key="1">
    <source>
        <dbReference type="HAMAP-Rule" id="MF_01008"/>
    </source>
</evidence>
<evidence type="ECO:0000255" key="2">
    <source>
        <dbReference type="PROSITE-ProRule" id="PRU01076"/>
    </source>
</evidence>
<accession>O69561</accession>
<gene>
    <name evidence="1" type="primary">mraZ</name>
    <name type="ordered locus">ML0905</name>
    <name type="ORF">MLCB268.11c</name>
</gene>